<organism>
    <name type="scientific">Physcomitrium patens</name>
    <name type="common">Spreading-leaved earth moss</name>
    <name type="synonym">Physcomitrella patens</name>
    <dbReference type="NCBI Taxonomy" id="3218"/>
    <lineage>
        <taxon>Eukaryota</taxon>
        <taxon>Viridiplantae</taxon>
        <taxon>Streptophyta</taxon>
        <taxon>Embryophyta</taxon>
        <taxon>Bryophyta</taxon>
        <taxon>Bryophytina</taxon>
        <taxon>Bryopsida</taxon>
        <taxon>Funariidae</taxon>
        <taxon>Funariales</taxon>
        <taxon>Funariaceae</taxon>
        <taxon>Physcomitrium</taxon>
    </lineage>
</organism>
<keyword id="KW-0150">Chloroplast</keyword>
<keyword id="KW-0934">Plastid</keyword>
<keyword id="KW-1185">Reference proteome</keyword>
<keyword id="KW-0687">Ribonucleoprotein</keyword>
<keyword id="KW-0689">Ribosomal protein</keyword>
<keyword id="KW-0694">RNA-binding</keyword>
<keyword id="KW-0699">rRNA-binding</keyword>
<sequence>MGQKINPLGFRLGVTQNHHSYWFAQPKNYSKLLQEDQKMRNCIENYVYKNIRNSSNYGGIARIEIKRKTDLIQVEIHTGFPALLVENRKRGIEQLKTDVQSILTSGDRKLRMTLTEVTKPYGEPNILAEYIALQLESRVAFRRTMKKAIELAKKTNIKGIKIQIAGRLNGAEIARVEWAREGRVPLQTLRAKIDYCYYPAQTIYGVLGIKIWIFQDEK</sequence>
<proteinExistence type="inferred from homology"/>
<protein>
    <recommendedName>
        <fullName evidence="2">Small ribosomal subunit protein uS3c</fullName>
    </recommendedName>
    <alternativeName>
        <fullName>30S ribosomal protein S3, chloroplastic</fullName>
    </alternativeName>
</protein>
<comment type="subunit">
    <text evidence="1">Part of the 30S ribosomal subunit.</text>
</comment>
<comment type="subcellular location">
    <subcellularLocation>
        <location>Plastid</location>
        <location>Chloroplast</location>
    </subcellularLocation>
</comment>
<comment type="similarity">
    <text evidence="2">Belongs to the universal ribosomal protein uS3 family.</text>
</comment>
<feature type="chain" id="PRO_0000130298" description="Small ribosomal subunit protein uS3c">
    <location>
        <begin position="1"/>
        <end position="218"/>
    </location>
</feature>
<feature type="domain" description="KH type-2">
    <location>
        <begin position="47"/>
        <end position="118"/>
    </location>
</feature>
<dbReference type="EMBL" id="AP005672">
    <property type="protein sequence ID" value="BAC85080.1"/>
    <property type="molecule type" value="Genomic_DNA"/>
</dbReference>
<dbReference type="RefSeq" id="NP_904230.1">
    <property type="nucleotide sequence ID" value="NC_005087.2"/>
</dbReference>
<dbReference type="RefSeq" id="YP_009477560.1">
    <property type="nucleotide sequence ID" value="NC_037465.1"/>
</dbReference>
<dbReference type="SMR" id="Q6YXK8"/>
<dbReference type="FunCoup" id="Q6YXK8">
    <property type="interactions" value="483"/>
</dbReference>
<dbReference type="STRING" id="3218.Q6YXK8"/>
<dbReference type="GeneID" id="2546815"/>
<dbReference type="GeneID" id="36487225"/>
<dbReference type="KEGG" id="ppp:2546815"/>
<dbReference type="InParanoid" id="Q6YXK8"/>
<dbReference type="OrthoDB" id="1842609at2759"/>
<dbReference type="Proteomes" id="UP000006727">
    <property type="component" value="Chloroplast"/>
</dbReference>
<dbReference type="GO" id="GO:0009507">
    <property type="term" value="C:chloroplast"/>
    <property type="evidence" value="ECO:0007669"/>
    <property type="project" value="UniProtKB-SubCell"/>
</dbReference>
<dbReference type="GO" id="GO:0022627">
    <property type="term" value="C:cytosolic small ribosomal subunit"/>
    <property type="evidence" value="ECO:0000318"/>
    <property type="project" value="GO_Central"/>
</dbReference>
<dbReference type="GO" id="GO:0019843">
    <property type="term" value="F:rRNA binding"/>
    <property type="evidence" value="ECO:0007669"/>
    <property type="project" value="UniProtKB-UniRule"/>
</dbReference>
<dbReference type="GO" id="GO:0003735">
    <property type="term" value="F:structural constituent of ribosome"/>
    <property type="evidence" value="ECO:0000318"/>
    <property type="project" value="GO_Central"/>
</dbReference>
<dbReference type="GO" id="GO:0006412">
    <property type="term" value="P:translation"/>
    <property type="evidence" value="ECO:0007669"/>
    <property type="project" value="UniProtKB-UniRule"/>
</dbReference>
<dbReference type="CDD" id="cd02412">
    <property type="entry name" value="KH-II_30S_S3"/>
    <property type="match status" value="1"/>
</dbReference>
<dbReference type="FunFam" id="3.30.1140.32:FF:000003">
    <property type="entry name" value="30S ribosomal protein S3, chloroplastic"/>
    <property type="match status" value="1"/>
</dbReference>
<dbReference type="Gene3D" id="3.30.300.20">
    <property type="match status" value="1"/>
</dbReference>
<dbReference type="Gene3D" id="3.30.1140.32">
    <property type="entry name" value="Ribosomal protein S3, C-terminal domain"/>
    <property type="match status" value="1"/>
</dbReference>
<dbReference type="HAMAP" id="MF_01309_B">
    <property type="entry name" value="Ribosomal_uS3_B"/>
    <property type="match status" value="1"/>
</dbReference>
<dbReference type="InterPro" id="IPR015946">
    <property type="entry name" value="KH_dom-like_a/b"/>
</dbReference>
<dbReference type="InterPro" id="IPR004044">
    <property type="entry name" value="KH_dom_type_2"/>
</dbReference>
<dbReference type="InterPro" id="IPR009019">
    <property type="entry name" value="KH_sf_prok-type"/>
</dbReference>
<dbReference type="InterPro" id="IPR036419">
    <property type="entry name" value="Ribosomal_S3_C_sf"/>
</dbReference>
<dbReference type="InterPro" id="IPR005704">
    <property type="entry name" value="Ribosomal_uS3_bac-typ"/>
</dbReference>
<dbReference type="InterPro" id="IPR001351">
    <property type="entry name" value="Ribosomal_uS3_C"/>
</dbReference>
<dbReference type="InterPro" id="IPR018280">
    <property type="entry name" value="Ribosomal_uS3_CS"/>
</dbReference>
<dbReference type="NCBIfam" id="TIGR01009">
    <property type="entry name" value="rpsC_bact"/>
    <property type="match status" value="1"/>
</dbReference>
<dbReference type="PANTHER" id="PTHR11760">
    <property type="entry name" value="30S/40S RIBOSOMAL PROTEIN S3"/>
    <property type="match status" value="1"/>
</dbReference>
<dbReference type="PANTHER" id="PTHR11760:SF19">
    <property type="entry name" value="SMALL RIBOSOMAL SUBUNIT PROTEIN US3C"/>
    <property type="match status" value="1"/>
</dbReference>
<dbReference type="Pfam" id="PF00189">
    <property type="entry name" value="Ribosomal_S3_C"/>
    <property type="match status" value="1"/>
</dbReference>
<dbReference type="SUPFAM" id="SSF54814">
    <property type="entry name" value="Prokaryotic type KH domain (KH-domain type II)"/>
    <property type="match status" value="1"/>
</dbReference>
<dbReference type="SUPFAM" id="SSF54821">
    <property type="entry name" value="Ribosomal protein S3 C-terminal domain"/>
    <property type="match status" value="1"/>
</dbReference>
<dbReference type="PROSITE" id="PS50823">
    <property type="entry name" value="KH_TYPE_2"/>
    <property type="match status" value="1"/>
</dbReference>
<dbReference type="PROSITE" id="PS00548">
    <property type="entry name" value="RIBOSOMAL_S3"/>
    <property type="match status" value="1"/>
</dbReference>
<geneLocation type="chloroplast"/>
<gene>
    <name type="primary">rps3</name>
</gene>
<accession>Q6YXK8</accession>
<name>RR3_PHYPA</name>
<evidence type="ECO:0000250" key="1"/>
<evidence type="ECO:0000305" key="2"/>
<reference key="1">
    <citation type="journal article" date="2003" name="Nucleic Acids Res.">
        <title>Complete chloroplast DNA sequence of the moss Physcomitrella patens: evidence for the loss and relocation of rpoA from the chloroplast to the nucleus.</title>
        <authorList>
            <person name="Sugiura C."/>
            <person name="Kobayashi Y."/>
            <person name="Setsuyuki A."/>
            <person name="Sugita C."/>
            <person name="Sugita M."/>
        </authorList>
    </citation>
    <scope>NUCLEOTIDE SEQUENCE [LARGE SCALE GENOMIC DNA]</scope>
    <source>
        <strain>cv. Gransden 2004</strain>
    </source>
</reference>